<name>ISPF_GEOSL</name>
<feature type="chain" id="PRO_0000189470" description="2-C-methyl-D-erythritol 2,4-cyclodiphosphate synthase">
    <location>
        <begin position="1"/>
        <end position="157"/>
    </location>
</feature>
<feature type="binding site" evidence="1">
    <location>
        <begin position="8"/>
        <end position="10"/>
    </location>
    <ligand>
        <name>4-CDP-2-C-methyl-D-erythritol 2-phosphate</name>
        <dbReference type="ChEBI" id="CHEBI:57919"/>
    </ligand>
</feature>
<feature type="binding site" evidence="1">
    <location>
        <position position="8"/>
    </location>
    <ligand>
        <name>a divalent metal cation</name>
        <dbReference type="ChEBI" id="CHEBI:60240"/>
    </ligand>
</feature>
<feature type="binding site" evidence="1">
    <location>
        <position position="10"/>
    </location>
    <ligand>
        <name>a divalent metal cation</name>
        <dbReference type="ChEBI" id="CHEBI:60240"/>
    </ligand>
</feature>
<feature type="binding site" evidence="1">
    <location>
        <begin position="34"/>
        <end position="35"/>
    </location>
    <ligand>
        <name>4-CDP-2-C-methyl-D-erythritol 2-phosphate</name>
        <dbReference type="ChEBI" id="CHEBI:57919"/>
    </ligand>
</feature>
<feature type="binding site" evidence="1">
    <location>
        <position position="42"/>
    </location>
    <ligand>
        <name>a divalent metal cation</name>
        <dbReference type="ChEBI" id="CHEBI:60240"/>
    </ligand>
</feature>
<feature type="binding site" evidence="1">
    <location>
        <begin position="56"/>
        <end position="58"/>
    </location>
    <ligand>
        <name>4-CDP-2-C-methyl-D-erythritol 2-phosphate</name>
        <dbReference type="ChEBI" id="CHEBI:57919"/>
    </ligand>
</feature>
<feature type="binding site" evidence="1">
    <location>
        <begin position="61"/>
        <end position="65"/>
    </location>
    <ligand>
        <name>4-CDP-2-C-methyl-D-erythritol 2-phosphate</name>
        <dbReference type="ChEBI" id="CHEBI:57919"/>
    </ligand>
</feature>
<feature type="binding site" evidence="1">
    <location>
        <begin position="100"/>
        <end position="106"/>
    </location>
    <ligand>
        <name>4-CDP-2-C-methyl-D-erythritol 2-phosphate</name>
        <dbReference type="ChEBI" id="CHEBI:57919"/>
    </ligand>
</feature>
<feature type="binding site" evidence="1">
    <location>
        <begin position="132"/>
        <end position="135"/>
    </location>
    <ligand>
        <name>4-CDP-2-C-methyl-D-erythritol 2-phosphate</name>
        <dbReference type="ChEBI" id="CHEBI:57919"/>
    </ligand>
</feature>
<feature type="binding site" evidence="1">
    <location>
        <position position="139"/>
    </location>
    <ligand>
        <name>4-CDP-2-C-methyl-D-erythritol 2-phosphate</name>
        <dbReference type="ChEBI" id="CHEBI:57919"/>
    </ligand>
</feature>
<feature type="binding site" evidence="1">
    <location>
        <position position="142"/>
    </location>
    <ligand>
        <name>4-CDP-2-C-methyl-D-erythritol 2-phosphate</name>
        <dbReference type="ChEBI" id="CHEBI:57919"/>
    </ligand>
</feature>
<feature type="site" description="Transition state stabilizer" evidence="1">
    <location>
        <position position="34"/>
    </location>
</feature>
<feature type="site" description="Transition state stabilizer" evidence="1">
    <location>
        <position position="133"/>
    </location>
</feature>
<accession>Q747A0</accession>
<gene>
    <name evidence="1" type="primary">ispF</name>
    <name type="ordered locus">GSU3367</name>
</gene>
<protein>
    <recommendedName>
        <fullName evidence="1">2-C-methyl-D-erythritol 2,4-cyclodiphosphate synthase</fullName>
        <shortName evidence="1">MECDP-synthase</shortName>
        <shortName evidence="1">MECPP-synthase</shortName>
        <shortName evidence="1">MECPS</shortName>
        <ecNumber evidence="1">4.6.1.12</ecNumber>
    </recommendedName>
</protein>
<reference key="1">
    <citation type="journal article" date="2003" name="Science">
        <title>Genome of Geobacter sulfurreducens: metal reduction in subsurface environments.</title>
        <authorList>
            <person name="Methe B.A."/>
            <person name="Nelson K.E."/>
            <person name="Eisen J.A."/>
            <person name="Paulsen I.T."/>
            <person name="Nelson W.C."/>
            <person name="Heidelberg J.F."/>
            <person name="Wu D."/>
            <person name="Wu M."/>
            <person name="Ward N.L."/>
            <person name="Beanan M.J."/>
            <person name="Dodson R.J."/>
            <person name="Madupu R."/>
            <person name="Brinkac L.M."/>
            <person name="Daugherty S.C."/>
            <person name="DeBoy R.T."/>
            <person name="Durkin A.S."/>
            <person name="Gwinn M.L."/>
            <person name="Kolonay J.F."/>
            <person name="Sullivan S.A."/>
            <person name="Haft D.H."/>
            <person name="Selengut J."/>
            <person name="Davidsen T.M."/>
            <person name="Zafar N."/>
            <person name="White O."/>
            <person name="Tran B."/>
            <person name="Romero C."/>
            <person name="Forberger H.A."/>
            <person name="Weidman J.F."/>
            <person name="Khouri H.M."/>
            <person name="Feldblyum T.V."/>
            <person name="Utterback T.R."/>
            <person name="Van Aken S.E."/>
            <person name="Lovley D.R."/>
            <person name="Fraser C.M."/>
        </authorList>
    </citation>
    <scope>NUCLEOTIDE SEQUENCE [LARGE SCALE GENOMIC DNA]</scope>
    <source>
        <strain>ATCC 51573 / DSM 12127 / PCA</strain>
    </source>
</reference>
<keyword id="KW-0414">Isoprene biosynthesis</keyword>
<keyword id="KW-0456">Lyase</keyword>
<keyword id="KW-0479">Metal-binding</keyword>
<keyword id="KW-1185">Reference proteome</keyword>
<organism>
    <name type="scientific">Geobacter sulfurreducens (strain ATCC 51573 / DSM 12127 / PCA)</name>
    <dbReference type="NCBI Taxonomy" id="243231"/>
    <lineage>
        <taxon>Bacteria</taxon>
        <taxon>Pseudomonadati</taxon>
        <taxon>Thermodesulfobacteriota</taxon>
        <taxon>Desulfuromonadia</taxon>
        <taxon>Geobacterales</taxon>
        <taxon>Geobacteraceae</taxon>
        <taxon>Geobacter</taxon>
    </lineage>
</organism>
<evidence type="ECO:0000255" key="1">
    <source>
        <dbReference type="HAMAP-Rule" id="MF_00107"/>
    </source>
</evidence>
<comment type="function">
    <text evidence="1">Involved in the biosynthesis of isopentenyl diphosphate (IPP) and dimethylallyl diphosphate (DMAPP), two major building blocks of isoprenoid compounds. Catalyzes the conversion of 4-diphosphocytidyl-2-C-methyl-D-erythritol 2-phosphate (CDP-ME2P) to 2-C-methyl-D-erythritol 2,4-cyclodiphosphate (ME-CPP) with a corresponding release of cytidine 5-monophosphate (CMP).</text>
</comment>
<comment type="catalytic activity">
    <reaction evidence="1">
        <text>4-CDP-2-C-methyl-D-erythritol 2-phosphate = 2-C-methyl-D-erythritol 2,4-cyclic diphosphate + CMP</text>
        <dbReference type="Rhea" id="RHEA:23864"/>
        <dbReference type="ChEBI" id="CHEBI:57919"/>
        <dbReference type="ChEBI" id="CHEBI:58483"/>
        <dbReference type="ChEBI" id="CHEBI:60377"/>
        <dbReference type="EC" id="4.6.1.12"/>
    </reaction>
</comment>
<comment type="cofactor">
    <cofactor evidence="1">
        <name>a divalent metal cation</name>
        <dbReference type="ChEBI" id="CHEBI:60240"/>
    </cofactor>
    <text evidence="1">Binds 1 divalent metal cation per subunit.</text>
</comment>
<comment type="pathway">
    <text evidence="1">Isoprenoid biosynthesis; isopentenyl diphosphate biosynthesis via DXP pathway; isopentenyl diphosphate from 1-deoxy-D-xylulose 5-phosphate: step 4/6.</text>
</comment>
<comment type="subunit">
    <text evidence="1">Homotrimer.</text>
</comment>
<comment type="similarity">
    <text evidence="1">Belongs to the IspF family.</text>
</comment>
<dbReference type="EC" id="4.6.1.12" evidence="1"/>
<dbReference type="EMBL" id="AE017180">
    <property type="protein sequence ID" value="AAR36757.1"/>
    <property type="molecule type" value="Genomic_DNA"/>
</dbReference>
<dbReference type="RefSeq" id="NP_954407.1">
    <property type="nucleotide sequence ID" value="NC_002939.5"/>
</dbReference>
<dbReference type="RefSeq" id="WP_010943978.1">
    <property type="nucleotide sequence ID" value="NC_002939.5"/>
</dbReference>
<dbReference type="SMR" id="Q747A0"/>
<dbReference type="FunCoup" id="Q747A0">
    <property type="interactions" value="387"/>
</dbReference>
<dbReference type="STRING" id="243231.GSU3367"/>
<dbReference type="EnsemblBacteria" id="AAR36757">
    <property type="protein sequence ID" value="AAR36757"/>
    <property type="gene ID" value="GSU3367"/>
</dbReference>
<dbReference type="KEGG" id="gsu:GSU3367"/>
<dbReference type="PATRIC" id="fig|243231.5.peg.3389"/>
<dbReference type="eggNOG" id="COG0245">
    <property type="taxonomic scope" value="Bacteria"/>
</dbReference>
<dbReference type="HOGENOM" id="CLU_084630_2_0_7"/>
<dbReference type="InParanoid" id="Q747A0"/>
<dbReference type="OrthoDB" id="9804336at2"/>
<dbReference type="UniPathway" id="UPA00056">
    <property type="reaction ID" value="UER00095"/>
</dbReference>
<dbReference type="Proteomes" id="UP000000577">
    <property type="component" value="Chromosome"/>
</dbReference>
<dbReference type="GO" id="GO:0008685">
    <property type="term" value="F:2-C-methyl-D-erythritol 2,4-cyclodiphosphate synthase activity"/>
    <property type="evidence" value="ECO:0000318"/>
    <property type="project" value="GO_Central"/>
</dbReference>
<dbReference type="GO" id="GO:0046872">
    <property type="term" value="F:metal ion binding"/>
    <property type="evidence" value="ECO:0007669"/>
    <property type="project" value="UniProtKB-KW"/>
</dbReference>
<dbReference type="GO" id="GO:0019288">
    <property type="term" value="P:isopentenyl diphosphate biosynthetic process, methylerythritol 4-phosphate pathway"/>
    <property type="evidence" value="ECO:0007669"/>
    <property type="project" value="UniProtKB-UniRule"/>
</dbReference>
<dbReference type="GO" id="GO:0016114">
    <property type="term" value="P:terpenoid biosynthetic process"/>
    <property type="evidence" value="ECO:0007669"/>
    <property type="project" value="InterPro"/>
</dbReference>
<dbReference type="CDD" id="cd00554">
    <property type="entry name" value="MECDP_synthase"/>
    <property type="match status" value="1"/>
</dbReference>
<dbReference type="FunFam" id="3.30.1330.50:FF:000001">
    <property type="entry name" value="2-C-methyl-D-erythritol 2,4-cyclodiphosphate synthase"/>
    <property type="match status" value="1"/>
</dbReference>
<dbReference type="Gene3D" id="3.30.1330.50">
    <property type="entry name" value="2-C-methyl-D-erythritol 2,4-cyclodiphosphate synthase"/>
    <property type="match status" value="1"/>
</dbReference>
<dbReference type="HAMAP" id="MF_00107">
    <property type="entry name" value="IspF"/>
    <property type="match status" value="1"/>
</dbReference>
<dbReference type="InterPro" id="IPR003526">
    <property type="entry name" value="MECDP_synthase"/>
</dbReference>
<dbReference type="InterPro" id="IPR020555">
    <property type="entry name" value="MECDP_synthase_CS"/>
</dbReference>
<dbReference type="InterPro" id="IPR036571">
    <property type="entry name" value="MECDP_synthase_sf"/>
</dbReference>
<dbReference type="NCBIfam" id="TIGR00151">
    <property type="entry name" value="ispF"/>
    <property type="match status" value="1"/>
</dbReference>
<dbReference type="PANTHER" id="PTHR43181">
    <property type="entry name" value="2-C-METHYL-D-ERYTHRITOL 2,4-CYCLODIPHOSPHATE SYNTHASE, CHLOROPLASTIC"/>
    <property type="match status" value="1"/>
</dbReference>
<dbReference type="PANTHER" id="PTHR43181:SF1">
    <property type="entry name" value="2-C-METHYL-D-ERYTHRITOL 2,4-CYCLODIPHOSPHATE SYNTHASE, CHLOROPLASTIC"/>
    <property type="match status" value="1"/>
</dbReference>
<dbReference type="Pfam" id="PF02542">
    <property type="entry name" value="YgbB"/>
    <property type="match status" value="1"/>
</dbReference>
<dbReference type="SUPFAM" id="SSF69765">
    <property type="entry name" value="IpsF-like"/>
    <property type="match status" value="1"/>
</dbReference>
<dbReference type="PROSITE" id="PS01350">
    <property type="entry name" value="ISPF"/>
    <property type="match status" value="1"/>
</dbReference>
<sequence>MRIGHGYDVHRLVAGRKLIVGGVDIPHELGLLGHSDADVLLHAISDAILGALALGDIGKHFPDTDPRYKGADSRALLRHVMELATRKGFHLGNLDATIVAQRPKMAPHIPLMREHIAADLMADPDRVNVKATTTEELGFAGRGEGIAAYAVVLMEEK</sequence>
<proteinExistence type="inferred from homology"/>